<feature type="chain" id="PRO_1000130435" description="Mannosyl-3-phosphoglycerate phosphatase">
    <location>
        <begin position="1"/>
        <end position="271"/>
    </location>
</feature>
<feature type="active site" description="Nucleophile" evidence="1">
    <location>
        <position position="13"/>
    </location>
</feature>
<feature type="binding site" evidence="1">
    <location>
        <position position="13"/>
    </location>
    <ligand>
        <name>Mg(2+)</name>
        <dbReference type="ChEBI" id="CHEBI:18420"/>
    </ligand>
</feature>
<feature type="binding site" evidence="1">
    <location>
        <position position="15"/>
    </location>
    <ligand>
        <name>Mg(2+)</name>
        <dbReference type="ChEBI" id="CHEBI:18420"/>
    </ligand>
</feature>
<feature type="binding site" evidence="1">
    <location>
        <position position="214"/>
    </location>
    <ligand>
        <name>Mg(2+)</name>
        <dbReference type="ChEBI" id="CHEBI:18420"/>
    </ligand>
</feature>
<protein>
    <recommendedName>
        <fullName evidence="1">Mannosyl-3-phosphoglycerate phosphatase</fullName>
        <shortName evidence="1">MPGP</shortName>
        <ecNumber evidence="1">3.1.3.70</ecNumber>
    </recommendedName>
</protein>
<gene>
    <name type="ordered locus">ECUMN_2246</name>
</gene>
<proteinExistence type="inferred from homology"/>
<accession>B7NBU7</accession>
<reference key="1">
    <citation type="journal article" date="2009" name="PLoS Genet.">
        <title>Organised genome dynamics in the Escherichia coli species results in highly diverse adaptive paths.</title>
        <authorList>
            <person name="Touchon M."/>
            <person name="Hoede C."/>
            <person name="Tenaillon O."/>
            <person name="Barbe V."/>
            <person name="Baeriswyl S."/>
            <person name="Bidet P."/>
            <person name="Bingen E."/>
            <person name="Bonacorsi S."/>
            <person name="Bouchier C."/>
            <person name="Bouvet O."/>
            <person name="Calteau A."/>
            <person name="Chiapello H."/>
            <person name="Clermont O."/>
            <person name="Cruveiller S."/>
            <person name="Danchin A."/>
            <person name="Diard M."/>
            <person name="Dossat C."/>
            <person name="Karoui M.E."/>
            <person name="Frapy E."/>
            <person name="Garry L."/>
            <person name="Ghigo J.M."/>
            <person name="Gilles A.M."/>
            <person name="Johnson J."/>
            <person name="Le Bouguenec C."/>
            <person name="Lescat M."/>
            <person name="Mangenot S."/>
            <person name="Martinez-Jehanne V."/>
            <person name="Matic I."/>
            <person name="Nassif X."/>
            <person name="Oztas S."/>
            <person name="Petit M.A."/>
            <person name="Pichon C."/>
            <person name="Rouy Z."/>
            <person name="Ruf C.S."/>
            <person name="Schneider D."/>
            <person name="Tourret J."/>
            <person name="Vacherie B."/>
            <person name="Vallenet D."/>
            <person name="Medigue C."/>
            <person name="Rocha E.P.C."/>
            <person name="Denamur E."/>
        </authorList>
    </citation>
    <scope>NUCLEOTIDE SEQUENCE [LARGE SCALE GENOMIC DNA]</scope>
    <source>
        <strain>UMN026 / ExPEC</strain>
    </source>
</reference>
<keyword id="KW-0963">Cytoplasm</keyword>
<keyword id="KW-0378">Hydrolase</keyword>
<keyword id="KW-0460">Magnesium</keyword>
<keyword id="KW-0479">Metal-binding</keyword>
<organism>
    <name type="scientific">Escherichia coli O17:K52:H18 (strain UMN026 / ExPEC)</name>
    <dbReference type="NCBI Taxonomy" id="585056"/>
    <lineage>
        <taxon>Bacteria</taxon>
        <taxon>Pseudomonadati</taxon>
        <taxon>Pseudomonadota</taxon>
        <taxon>Gammaproteobacteria</taxon>
        <taxon>Enterobacterales</taxon>
        <taxon>Enterobacteriaceae</taxon>
        <taxon>Escherichia</taxon>
    </lineage>
</organism>
<evidence type="ECO:0000255" key="1">
    <source>
        <dbReference type="HAMAP-Rule" id="MF_00617"/>
    </source>
</evidence>
<dbReference type="EC" id="3.1.3.70" evidence="1"/>
<dbReference type="EMBL" id="CU928163">
    <property type="protein sequence ID" value="CAR13437.1"/>
    <property type="molecule type" value="Genomic_DNA"/>
</dbReference>
<dbReference type="RefSeq" id="WP_000949103.1">
    <property type="nucleotide sequence ID" value="NC_011751.1"/>
</dbReference>
<dbReference type="RefSeq" id="YP_002412966.1">
    <property type="nucleotide sequence ID" value="NC_011751.1"/>
</dbReference>
<dbReference type="SMR" id="B7NBU7"/>
<dbReference type="STRING" id="585056.ECUMN_2246"/>
<dbReference type="KEGG" id="eum:ECUMN_2246"/>
<dbReference type="PATRIC" id="fig|585056.7.peg.2434"/>
<dbReference type="HOGENOM" id="CLU_063016_1_0_6"/>
<dbReference type="Proteomes" id="UP000007097">
    <property type="component" value="Chromosome"/>
</dbReference>
<dbReference type="GO" id="GO:0005829">
    <property type="term" value="C:cytosol"/>
    <property type="evidence" value="ECO:0007669"/>
    <property type="project" value="TreeGrafter"/>
</dbReference>
<dbReference type="GO" id="GO:0000287">
    <property type="term" value="F:magnesium ion binding"/>
    <property type="evidence" value="ECO:0007669"/>
    <property type="project" value="UniProtKB-ARBA"/>
</dbReference>
<dbReference type="GO" id="GO:0050531">
    <property type="term" value="F:mannosyl-3-phosphoglycerate phosphatase activity"/>
    <property type="evidence" value="ECO:0007669"/>
    <property type="project" value="UniProtKB-UniRule"/>
</dbReference>
<dbReference type="GO" id="GO:0051479">
    <property type="term" value="P:mannosylglycerate biosynthetic process"/>
    <property type="evidence" value="ECO:0007669"/>
    <property type="project" value="InterPro"/>
</dbReference>
<dbReference type="CDD" id="cd07507">
    <property type="entry name" value="HAD_Pase"/>
    <property type="match status" value="1"/>
</dbReference>
<dbReference type="Gene3D" id="3.40.50.1000">
    <property type="entry name" value="HAD superfamily/HAD-like"/>
    <property type="match status" value="1"/>
</dbReference>
<dbReference type="Gene3D" id="3.30.980.20">
    <property type="entry name" value="Putative mannosyl-3-phosphoglycerate phosphatase, domain 2"/>
    <property type="match status" value="1"/>
</dbReference>
<dbReference type="HAMAP" id="MF_00617">
    <property type="entry name" value="MPGP_rel"/>
    <property type="match status" value="1"/>
</dbReference>
<dbReference type="InterPro" id="IPR036412">
    <property type="entry name" value="HAD-like_sf"/>
</dbReference>
<dbReference type="InterPro" id="IPR006381">
    <property type="entry name" value="HAD-SF-IIB-MPGP"/>
</dbReference>
<dbReference type="InterPro" id="IPR006379">
    <property type="entry name" value="HAD-SF_hydro_IIB"/>
</dbReference>
<dbReference type="InterPro" id="IPR023214">
    <property type="entry name" value="HAD_sf"/>
</dbReference>
<dbReference type="InterPro" id="IPR012815">
    <property type="entry name" value="MPG_Pase"/>
</dbReference>
<dbReference type="NCBIfam" id="TIGR01484">
    <property type="entry name" value="HAD-SF-IIB"/>
    <property type="match status" value="1"/>
</dbReference>
<dbReference type="NCBIfam" id="TIGR01486">
    <property type="entry name" value="HAD-SF-IIB-MPGP"/>
    <property type="match status" value="1"/>
</dbReference>
<dbReference type="NCBIfam" id="TIGR02463">
    <property type="entry name" value="MPGP_rel"/>
    <property type="match status" value="1"/>
</dbReference>
<dbReference type="NCBIfam" id="NF002976">
    <property type="entry name" value="PRK03669.1"/>
    <property type="match status" value="1"/>
</dbReference>
<dbReference type="PANTHER" id="PTHR10000:SF8">
    <property type="entry name" value="HAD SUPERFAMILY HYDROLASE-LIKE, TYPE 3"/>
    <property type="match status" value="1"/>
</dbReference>
<dbReference type="PANTHER" id="PTHR10000">
    <property type="entry name" value="PHOSPHOSERINE PHOSPHATASE"/>
    <property type="match status" value="1"/>
</dbReference>
<dbReference type="Pfam" id="PF08282">
    <property type="entry name" value="Hydrolase_3"/>
    <property type="match status" value="1"/>
</dbReference>
<dbReference type="SFLD" id="SFLDG01142">
    <property type="entry name" value="C2.B.2:_Mannosyl-3-phosphoglyc"/>
    <property type="match status" value="1"/>
</dbReference>
<dbReference type="SFLD" id="SFLDS00003">
    <property type="entry name" value="Haloacid_Dehalogenase"/>
    <property type="match status" value="1"/>
</dbReference>
<dbReference type="SUPFAM" id="SSF56784">
    <property type="entry name" value="HAD-like"/>
    <property type="match status" value="1"/>
</dbReference>
<name>MPGP_ECOLU</name>
<comment type="catalytic activity">
    <reaction evidence="1">
        <text>2-O-(alpha-D-mannosyl)-3-phosphoglycerate + H2O = (2R)-2-O-(alpha-D-mannosyl)-glycerate + phosphate</text>
        <dbReference type="Rhea" id="RHEA:19309"/>
        <dbReference type="ChEBI" id="CHEBI:15377"/>
        <dbReference type="ChEBI" id="CHEBI:43474"/>
        <dbReference type="ChEBI" id="CHEBI:57541"/>
        <dbReference type="ChEBI" id="CHEBI:57744"/>
        <dbReference type="EC" id="3.1.3.70"/>
    </reaction>
</comment>
<comment type="cofactor">
    <cofactor evidence="1">
        <name>Mg(2+)</name>
        <dbReference type="ChEBI" id="CHEBI:18420"/>
    </cofactor>
</comment>
<comment type="subcellular location">
    <subcellularLocation>
        <location evidence="1">Cytoplasm</location>
    </subcellularLocation>
</comment>
<comment type="similarity">
    <text evidence="1">Belongs to the HAD-like hydrolase superfamily. MPGP family.</text>
</comment>
<sequence length="271" mass="30456">MLSIQQPLLVFSDLDGTLLDSHSYDWQPAAPWLSRLREANVPVILCSSKTSAEMLYLQKMLGLQGLPLIAENGAVIQLAEQWQDIDGFPRIISGISHGEISQVLNTLREKEHFKFTTFDDVDDATIAEWTGLSRSQAALTQLHEASVTLIWRDSDERMAQFTTRLHELGLQFMQGARFWHVLDASAGKDQAANWIIATYQQLSGKRPTTLGLGDGPNDAPLLEVMDYAVIVKGLNREGVHLHDEDPARVWRTQREGPEGWREGLDHFFSAH</sequence>